<gene>
    <name evidence="1" type="primary">mutL</name>
    <name type="ordered locus">BALH_3396</name>
</gene>
<keyword id="KW-0227">DNA damage</keyword>
<keyword id="KW-0234">DNA repair</keyword>
<accession>A0RHE0</accession>
<organism>
    <name type="scientific">Bacillus thuringiensis (strain Al Hakam)</name>
    <dbReference type="NCBI Taxonomy" id="412694"/>
    <lineage>
        <taxon>Bacteria</taxon>
        <taxon>Bacillati</taxon>
        <taxon>Bacillota</taxon>
        <taxon>Bacilli</taxon>
        <taxon>Bacillales</taxon>
        <taxon>Bacillaceae</taxon>
        <taxon>Bacillus</taxon>
        <taxon>Bacillus cereus group</taxon>
    </lineage>
</organism>
<sequence>MGKIRKLDDQLSNLIAAGEVVERPASVVKELVENSIDANSTSIEIHLEEAGLSKIRIIDNGDGIAEEDCIVAFERHATSKIKDENDLFRIRTLGFRGEALPSIASVSELELITSTGDAPGTHLIIKGGDIIKQEKTASRKGTDITVQNLFFNTPARLKYMKTIHTELGNITDIVYRIAMSHPEVSLKLFHNEKKLLHTSGNGDVRQVLASIYSIQVAKKLVPIEAESLDFTIKGYVTLPEVTRASRNYMSTIVNGRYVRNFVLMKAIQQGYHTLLPVGRYPIGFLSIEMDPMLVDVNVHPAKLEVRFSKEQELLKLIEETLQAAFKKIQLIPDAGVTTKKKEKDESVQEQFQFEHAKPKEPSMPEIVLPTGMDEKQEEPLAVKQPTQLWQPPKQEWQPPQSLVREEQSWQPSTKPIIEEPIQEEKSWDSNEEGFELEELEEEVREIKEIEMNGNDLPPLYPIGQMHGTYIFAQNDKGLYMIDQHAAQERINYEYFRDKVGRVAQEVQELLVPYRIDLSLTEFLRVEEQLEELKKVGLFLEQFGHQSFIVRSHPTWFPKGQETEIIDEMMEQVVKLKKVDIKKLREEAAIMMSCKASIKANQYLTNDQIFALLEELRTTTNPYTCPHGRPILVHHSTYELEKMFKRVM</sequence>
<name>MUTL_BACAH</name>
<feature type="chain" id="PRO_1000009976" description="DNA mismatch repair protein MutL">
    <location>
        <begin position="1"/>
        <end position="647"/>
    </location>
</feature>
<protein>
    <recommendedName>
        <fullName evidence="1">DNA mismatch repair protein MutL</fullName>
    </recommendedName>
</protein>
<reference key="1">
    <citation type="journal article" date="2007" name="J. Bacteriol.">
        <title>The complete genome sequence of Bacillus thuringiensis Al Hakam.</title>
        <authorList>
            <person name="Challacombe J.F."/>
            <person name="Altherr M.R."/>
            <person name="Xie G."/>
            <person name="Bhotika S.S."/>
            <person name="Brown N."/>
            <person name="Bruce D."/>
            <person name="Campbell C.S."/>
            <person name="Campbell M.L."/>
            <person name="Chen J."/>
            <person name="Chertkov O."/>
            <person name="Cleland C."/>
            <person name="Dimitrijevic M."/>
            <person name="Doggett N.A."/>
            <person name="Fawcett J.J."/>
            <person name="Glavina T."/>
            <person name="Goodwin L.A."/>
            <person name="Green L.D."/>
            <person name="Han C.S."/>
            <person name="Hill K.K."/>
            <person name="Hitchcock P."/>
            <person name="Jackson P.J."/>
            <person name="Keim P."/>
            <person name="Kewalramani A.R."/>
            <person name="Longmire J."/>
            <person name="Lucas S."/>
            <person name="Malfatti S."/>
            <person name="Martinez D."/>
            <person name="McMurry K."/>
            <person name="Meincke L.J."/>
            <person name="Misra M."/>
            <person name="Moseman B.L."/>
            <person name="Mundt M."/>
            <person name="Munk A.C."/>
            <person name="Okinaka R.T."/>
            <person name="Parson-Quintana B."/>
            <person name="Reilly L.P."/>
            <person name="Richardson P."/>
            <person name="Robinson D.L."/>
            <person name="Saunders E."/>
            <person name="Tapia R."/>
            <person name="Tesmer J.G."/>
            <person name="Thayer N."/>
            <person name="Thompson L.S."/>
            <person name="Tice H."/>
            <person name="Ticknor L.O."/>
            <person name="Wills P.L."/>
            <person name="Gilna P."/>
            <person name="Brettin T.S."/>
        </authorList>
    </citation>
    <scope>NUCLEOTIDE SEQUENCE [LARGE SCALE GENOMIC DNA]</scope>
    <source>
        <strain>Al Hakam</strain>
    </source>
</reference>
<proteinExistence type="inferred from homology"/>
<comment type="function">
    <text evidence="1">This protein is involved in the repair of mismatches in DNA. It is required for dam-dependent methyl-directed DNA mismatch repair. May act as a 'molecular matchmaker', a protein that promotes the formation of a stable complex between two or more DNA-binding proteins in an ATP-dependent manner without itself being part of a final effector complex.</text>
</comment>
<comment type="similarity">
    <text evidence="1">Belongs to the DNA mismatch repair MutL/HexB family.</text>
</comment>
<dbReference type="EMBL" id="CP000485">
    <property type="protein sequence ID" value="ABK86633.1"/>
    <property type="molecule type" value="Genomic_DNA"/>
</dbReference>
<dbReference type="RefSeq" id="WP_000516470.1">
    <property type="nucleotide sequence ID" value="NC_008600.1"/>
</dbReference>
<dbReference type="SMR" id="A0RHE0"/>
<dbReference type="KEGG" id="btl:BALH_3396"/>
<dbReference type="HOGENOM" id="CLU_004131_4_1_9"/>
<dbReference type="GO" id="GO:0032300">
    <property type="term" value="C:mismatch repair complex"/>
    <property type="evidence" value="ECO:0007669"/>
    <property type="project" value="InterPro"/>
</dbReference>
<dbReference type="GO" id="GO:0005524">
    <property type="term" value="F:ATP binding"/>
    <property type="evidence" value="ECO:0007669"/>
    <property type="project" value="InterPro"/>
</dbReference>
<dbReference type="GO" id="GO:0016887">
    <property type="term" value="F:ATP hydrolysis activity"/>
    <property type="evidence" value="ECO:0007669"/>
    <property type="project" value="InterPro"/>
</dbReference>
<dbReference type="GO" id="GO:0140664">
    <property type="term" value="F:ATP-dependent DNA damage sensor activity"/>
    <property type="evidence" value="ECO:0007669"/>
    <property type="project" value="InterPro"/>
</dbReference>
<dbReference type="GO" id="GO:0030983">
    <property type="term" value="F:mismatched DNA binding"/>
    <property type="evidence" value="ECO:0007669"/>
    <property type="project" value="InterPro"/>
</dbReference>
<dbReference type="GO" id="GO:0006298">
    <property type="term" value="P:mismatch repair"/>
    <property type="evidence" value="ECO:0007669"/>
    <property type="project" value="UniProtKB-UniRule"/>
</dbReference>
<dbReference type="CDD" id="cd16926">
    <property type="entry name" value="HATPase_MutL-MLH-PMS-like"/>
    <property type="match status" value="1"/>
</dbReference>
<dbReference type="CDD" id="cd00782">
    <property type="entry name" value="MutL_Trans"/>
    <property type="match status" value="1"/>
</dbReference>
<dbReference type="FunFam" id="3.30.1370.100:FF:000004">
    <property type="entry name" value="DNA mismatch repair endonuclease MutL"/>
    <property type="match status" value="1"/>
</dbReference>
<dbReference type="FunFam" id="3.30.230.10:FF:000036">
    <property type="entry name" value="DNA mismatch repair endonuclease MutL"/>
    <property type="match status" value="1"/>
</dbReference>
<dbReference type="FunFam" id="3.30.565.10:FF:000003">
    <property type="entry name" value="DNA mismatch repair endonuclease MutL"/>
    <property type="match status" value="1"/>
</dbReference>
<dbReference type="Gene3D" id="3.30.230.10">
    <property type="match status" value="1"/>
</dbReference>
<dbReference type="Gene3D" id="3.30.565.10">
    <property type="entry name" value="Histidine kinase-like ATPase, C-terminal domain"/>
    <property type="match status" value="1"/>
</dbReference>
<dbReference type="Gene3D" id="3.30.1540.20">
    <property type="entry name" value="MutL, C-terminal domain, dimerisation subdomain"/>
    <property type="match status" value="1"/>
</dbReference>
<dbReference type="Gene3D" id="3.30.1370.100">
    <property type="entry name" value="MutL, C-terminal domain, regulatory subdomain"/>
    <property type="match status" value="1"/>
</dbReference>
<dbReference type="HAMAP" id="MF_00149">
    <property type="entry name" value="DNA_mis_repair"/>
    <property type="match status" value="1"/>
</dbReference>
<dbReference type="InterPro" id="IPR014762">
    <property type="entry name" value="DNA_mismatch_repair_CS"/>
</dbReference>
<dbReference type="InterPro" id="IPR020667">
    <property type="entry name" value="DNA_mismatch_repair_MutL"/>
</dbReference>
<dbReference type="InterPro" id="IPR013507">
    <property type="entry name" value="DNA_mismatch_S5_2-like"/>
</dbReference>
<dbReference type="InterPro" id="IPR036890">
    <property type="entry name" value="HATPase_C_sf"/>
</dbReference>
<dbReference type="InterPro" id="IPR002099">
    <property type="entry name" value="MutL/Mlh/PMS"/>
</dbReference>
<dbReference type="InterPro" id="IPR038973">
    <property type="entry name" value="MutL/Mlh/Pms-like"/>
</dbReference>
<dbReference type="InterPro" id="IPR014790">
    <property type="entry name" value="MutL_C"/>
</dbReference>
<dbReference type="InterPro" id="IPR042120">
    <property type="entry name" value="MutL_C_dimsub"/>
</dbReference>
<dbReference type="InterPro" id="IPR042121">
    <property type="entry name" value="MutL_C_regsub"/>
</dbReference>
<dbReference type="InterPro" id="IPR037198">
    <property type="entry name" value="MutL_C_sf"/>
</dbReference>
<dbReference type="InterPro" id="IPR020568">
    <property type="entry name" value="Ribosomal_Su5_D2-typ_SF"/>
</dbReference>
<dbReference type="InterPro" id="IPR014721">
    <property type="entry name" value="Ribsml_uS5_D2-typ_fold_subgr"/>
</dbReference>
<dbReference type="NCBIfam" id="TIGR00585">
    <property type="entry name" value="mutl"/>
    <property type="match status" value="1"/>
</dbReference>
<dbReference type="NCBIfam" id="NF000950">
    <property type="entry name" value="PRK00095.1-3"/>
    <property type="match status" value="1"/>
</dbReference>
<dbReference type="PANTHER" id="PTHR10073">
    <property type="entry name" value="DNA MISMATCH REPAIR PROTEIN MLH, PMS, MUTL"/>
    <property type="match status" value="1"/>
</dbReference>
<dbReference type="PANTHER" id="PTHR10073:SF12">
    <property type="entry name" value="DNA MISMATCH REPAIR PROTEIN MLH1"/>
    <property type="match status" value="1"/>
</dbReference>
<dbReference type="Pfam" id="PF01119">
    <property type="entry name" value="DNA_mis_repair"/>
    <property type="match status" value="1"/>
</dbReference>
<dbReference type="Pfam" id="PF13589">
    <property type="entry name" value="HATPase_c_3"/>
    <property type="match status" value="1"/>
</dbReference>
<dbReference type="Pfam" id="PF08676">
    <property type="entry name" value="MutL_C"/>
    <property type="match status" value="1"/>
</dbReference>
<dbReference type="SMART" id="SM01340">
    <property type="entry name" value="DNA_mis_repair"/>
    <property type="match status" value="1"/>
</dbReference>
<dbReference type="SMART" id="SM00853">
    <property type="entry name" value="MutL_C"/>
    <property type="match status" value="1"/>
</dbReference>
<dbReference type="SUPFAM" id="SSF55874">
    <property type="entry name" value="ATPase domain of HSP90 chaperone/DNA topoisomerase II/histidine kinase"/>
    <property type="match status" value="1"/>
</dbReference>
<dbReference type="SUPFAM" id="SSF118116">
    <property type="entry name" value="DNA mismatch repair protein MutL"/>
    <property type="match status" value="1"/>
</dbReference>
<dbReference type="SUPFAM" id="SSF54211">
    <property type="entry name" value="Ribosomal protein S5 domain 2-like"/>
    <property type="match status" value="1"/>
</dbReference>
<dbReference type="PROSITE" id="PS00058">
    <property type="entry name" value="DNA_MISMATCH_REPAIR_1"/>
    <property type="match status" value="1"/>
</dbReference>
<evidence type="ECO:0000255" key="1">
    <source>
        <dbReference type="HAMAP-Rule" id="MF_00149"/>
    </source>
</evidence>